<protein>
    <recommendedName>
        <fullName evidence="1">Outer-membrane lipoprotein LolB</fullName>
    </recommendedName>
</protein>
<proteinExistence type="inferred from homology"/>
<name>LOLB_SALSV</name>
<evidence type="ECO:0000255" key="1">
    <source>
        <dbReference type="HAMAP-Rule" id="MF_00233"/>
    </source>
</evidence>
<keyword id="KW-0998">Cell outer membrane</keyword>
<keyword id="KW-0143">Chaperone</keyword>
<keyword id="KW-0449">Lipoprotein</keyword>
<keyword id="KW-0472">Membrane</keyword>
<keyword id="KW-0564">Palmitate</keyword>
<keyword id="KW-0653">Protein transport</keyword>
<keyword id="KW-0732">Signal</keyword>
<keyword id="KW-0813">Transport</keyword>
<organism>
    <name type="scientific">Salmonella schwarzengrund (strain CVM19633)</name>
    <dbReference type="NCBI Taxonomy" id="439843"/>
    <lineage>
        <taxon>Bacteria</taxon>
        <taxon>Pseudomonadati</taxon>
        <taxon>Pseudomonadota</taxon>
        <taxon>Gammaproteobacteria</taxon>
        <taxon>Enterobacterales</taxon>
        <taxon>Enterobacteriaceae</taxon>
        <taxon>Salmonella</taxon>
    </lineage>
</organism>
<sequence>MTLPDFRLIRLLPLASLVLTACTLPGHEGPGKSPDSPQWRQHQQEVRHLNQYQTRGAFAYISDDQKVYARFFWQQTGQDRYRLLLTNPLGSTELELNAQPGNVQLVDNKGQRYTADDAEEMIGKLTGMPIPLNSLRQWILGLPGDATDYKLDDQYRLSEVNYRQDGKNWKVVYGGYDSKTQPAMPANMELSDGSQRIKLKMDNWIVK</sequence>
<feature type="signal peptide" evidence="1">
    <location>
        <begin position="1"/>
        <end position="21"/>
    </location>
</feature>
<feature type="chain" id="PRO_1000100509" description="Outer-membrane lipoprotein LolB">
    <location>
        <begin position="22"/>
        <end position="207"/>
    </location>
</feature>
<feature type="lipid moiety-binding region" description="N-palmitoyl cysteine" evidence="1">
    <location>
        <position position="22"/>
    </location>
</feature>
<feature type="lipid moiety-binding region" description="S-diacylglycerol cysteine" evidence="1">
    <location>
        <position position="22"/>
    </location>
</feature>
<accession>B4TXU5</accession>
<comment type="function">
    <text evidence="1">Plays a critical role in the incorporation of lipoproteins in the outer membrane after they are released by the LolA protein.</text>
</comment>
<comment type="subunit">
    <text evidence="1">Monomer.</text>
</comment>
<comment type="subcellular location">
    <subcellularLocation>
        <location evidence="1">Cell outer membrane</location>
        <topology evidence="1">Lipid-anchor</topology>
    </subcellularLocation>
</comment>
<comment type="similarity">
    <text evidence="1">Belongs to the LolB family.</text>
</comment>
<gene>
    <name evidence="1" type="primary">lolB</name>
    <name type="ordered locus">SeSA_A1916</name>
</gene>
<reference key="1">
    <citation type="journal article" date="2011" name="J. Bacteriol.">
        <title>Comparative genomics of 28 Salmonella enterica isolates: evidence for CRISPR-mediated adaptive sublineage evolution.</title>
        <authorList>
            <person name="Fricke W.F."/>
            <person name="Mammel M.K."/>
            <person name="McDermott P.F."/>
            <person name="Tartera C."/>
            <person name="White D.G."/>
            <person name="Leclerc J.E."/>
            <person name="Ravel J."/>
            <person name="Cebula T.A."/>
        </authorList>
    </citation>
    <scope>NUCLEOTIDE SEQUENCE [LARGE SCALE GENOMIC DNA]</scope>
    <source>
        <strain>CVM19633</strain>
    </source>
</reference>
<dbReference type="EMBL" id="CP001127">
    <property type="protein sequence ID" value="ACF91551.1"/>
    <property type="molecule type" value="Genomic_DNA"/>
</dbReference>
<dbReference type="RefSeq" id="WP_000174481.1">
    <property type="nucleotide sequence ID" value="NC_011094.1"/>
</dbReference>
<dbReference type="SMR" id="B4TXU5"/>
<dbReference type="KEGG" id="sew:SeSA_A1916"/>
<dbReference type="HOGENOM" id="CLU_092816_1_1_6"/>
<dbReference type="Proteomes" id="UP000001865">
    <property type="component" value="Chromosome"/>
</dbReference>
<dbReference type="GO" id="GO:0009279">
    <property type="term" value="C:cell outer membrane"/>
    <property type="evidence" value="ECO:0007669"/>
    <property type="project" value="UniProtKB-SubCell"/>
</dbReference>
<dbReference type="GO" id="GO:0044874">
    <property type="term" value="P:lipoprotein localization to outer membrane"/>
    <property type="evidence" value="ECO:0007669"/>
    <property type="project" value="UniProtKB-UniRule"/>
</dbReference>
<dbReference type="GO" id="GO:0015031">
    <property type="term" value="P:protein transport"/>
    <property type="evidence" value="ECO:0007669"/>
    <property type="project" value="UniProtKB-KW"/>
</dbReference>
<dbReference type="CDD" id="cd16326">
    <property type="entry name" value="LolB"/>
    <property type="match status" value="1"/>
</dbReference>
<dbReference type="FunFam" id="2.50.20.10:FF:000002">
    <property type="entry name" value="Outer-membrane lipoprotein LolB"/>
    <property type="match status" value="1"/>
</dbReference>
<dbReference type="Gene3D" id="2.50.20.10">
    <property type="entry name" value="Lipoprotein localisation LolA/LolB/LppX"/>
    <property type="match status" value="1"/>
</dbReference>
<dbReference type="HAMAP" id="MF_00233">
    <property type="entry name" value="LolB"/>
    <property type="match status" value="1"/>
</dbReference>
<dbReference type="InterPro" id="IPR029046">
    <property type="entry name" value="LolA/LolB/LppX"/>
</dbReference>
<dbReference type="InterPro" id="IPR004565">
    <property type="entry name" value="OM_lipoprot_LolB"/>
</dbReference>
<dbReference type="NCBIfam" id="TIGR00548">
    <property type="entry name" value="lolB"/>
    <property type="match status" value="1"/>
</dbReference>
<dbReference type="Pfam" id="PF03550">
    <property type="entry name" value="LolB"/>
    <property type="match status" value="1"/>
</dbReference>
<dbReference type="SUPFAM" id="SSF89392">
    <property type="entry name" value="Prokaryotic lipoproteins and lipoprotein localization factors"/>
    <property type="match status" value="1"/>
</dbReference>
<dbReference type="PROSITE" id="PS51257">
    <property type="entry name" value="PROKAR_LIPOPROTEIN"/>
    <property type="match status" value="1"/>
</dbReference>